<gene>
    <name type="primary">Mfsd10</name>
    <name type="synonym">Tetran</name>
</gene>
<reference evidence="10" key="1">
    <citation type="journal article" date="2005" name="Science">
        <title>The transcriptional landscape of the mammalian genome.</title>
        <authorList>
            <person name="Carninci P."/>
            <person name="Kasukawa T."/>
            <person name="Katayama S."/>
            <person name="Gough J."/>
            <person name="Frith M.C."/>
            <person name="Maeda N."/>
            <person name="Oyama R."/>
            <person name="Ravasi T."/>
            <person name="Lenhard B."/>
            <person name="Wells C."/>
            <person name="Kodzius R."/>
            <person name="Shimokawa K."/>
            <person name="Bajic V.B."/>
            <person name="Brenner S.E."/>
            <person name="Batalov S."/>
            <person name="Forrest A.R."/>
            <person name="Zavolan M."/>
            <person name="Davis M.J."/>
            <person name="Wilming L.G."/>
            <person name="Aidinis V."/>
            <person name="Allen J.E."/>
            <person name="Ambesi-Impiombato A."/>
            <person name="Apweiler R."/>
            <person name="Aturaliya R.N."/>
            <person name="Bailey T.L."/>
            <person name="Bansal M."/>
            <person name="Baxter L."/>
            <person name="Beisel K.W."/>
            <person name="Bersano T."/>
            <person name="Bono H."/>
            <person name="Chalk A.M."/>
            <person name="Chiu K.P."/>
            <person name="Choudhary V."/>
            <person name="Christoffels A."/>
            <person name="Clutterbuck D.R."/>
            <person name="Crowe M.L."/>
            <person name="Dalla E."/>
            <person name="Dalrymple B.P."/>
            <person name="de Bono B."/>
            <person name="Della Gatta G."/>
            <person name="di Bernardo D."/>
            <person name="Down T."/>
            <person name="Engstrom P."/>
            <person name="Fagiolini M."/>
            <person name="Faulkner G."/>
            <person name="Fletcher C.F."/>
            <person name="Fukushima T."/>
            <person name="Furuno M."/>
            <person name="Futaki S."/>
            <person name="Gariboldi M."/>
            <person name="Georgii-Hemming P."/>
            <person name="Gingeras T.R."/>
            <person name="Gojobori T."/>
            <person name="Green R.E."/>
            <person name="Gustincich S."/>
            <person name="Harbers M."/>
            <person name="Hayashi Y."/>
            <person name="Hensch T.K."/>
            <person name="Hirokawa N."/>
            <person name="Hill D."/>
            <person name="Huminiecki L."/>
            <person name="Iacono M."/>
            <person name="Ikeo K."/>
            <person name="Iwama A."/>
            <person name="Ishikawa T."/>
            <person name="Jakt M."/>
            <person name="Kanapin A."/>
            <person name="Katoh M."/>
            <person name="Kawasawa Y."/>
            <person name="Kelso J."/>
            <person name="Kitamura H."/>
            <person name="Kitano H."/>
            <person name="Kollias G."/>
            <person name="Krishnan S.P."/>
            <person name="Kruger A."/>
            <person name="Kummerfeld S.K."/>
            <person name="Kurochkin I.V."/>
            <person name="Lareau L.F."/>
            <person name="Lazarevic D."/>
            <person name="Lipovich L."/>
            <person name="Liu J."/>
            <person name="Liuni S."/>
            <person name="McWilliam S."/>
            <person name="Madan Babu M."/>
            <person name="Madera M."/>
            <person name="Marchionni L."/>
            <person name="Matsuda H."/>
            <person name="Matsuzawa S."/>
            <person name="Miki H."/>
            <person name="Mignone F."/>
            <person name="Miyake S."/>
            <person name="Morris K."/>
            <person name="Mottagui-Tabar S."/>
            <person name="Mulder N."/>
            <person name="Nakano N."/>
            <person name="Nakauchi H."/>
            <person name="Ng P."/>
            <person name="Nilsson R."/>
            <person name="Nishiguchi S."/>
            <person name="Nishikawa S."/>
            <person name="Nori F."/>
            <person name="Ohara O."/>
            <person name="Okazaki Y."/>
            <person name="Orlando V."/>
            <person name="Pang K.C."/>
            <person name="Pavan W.J."/>
            <person name="Pavesi G."/>
            <person name="Pesole G."/>
            <person name="Petrovsky N."/>
            <person name="Piazza S."/>
            <person name="Reed J."/>
            <person name="Reid J.F."/>
            <person name="Ring B.Z."/>
            <person name="Ringwald M."/>
            <person name="Rost B."/>
            <person name="Ruan Y."/>
            <person name="Salzberg S.L."/>
            <person name="Sandelin A."/>
            <person name="Schneider C."/>
            <person name="Schoenbach C."/>
            <person name="Sekiguchi K."/>
            <person name="Semple C.A."/>
            <person name="Seno S."/>
            <person name="Sessa L."/>
            <person name="Sheng Y."/>
            <person name="Shibata Y."/>
            <person name="Shimada H."/>
            <person name="Shimada K."/>
            <person name="Silva D."/>
            <person name="Sinclair B."/>
            <person name="Sperling S."/>
            <person name="Stupka E."/>
            <person name="Sugiura K."/>
            <person name="Sultana R."/>
            <person name="Takenaka Y."/>
            <person name="Taki K."/>
            <person name="Tammoja K."/>
            <person name="Tan S.L."/>
            <person name="Tang S."/>
            <person name="Taylor M.S."/>
            <person name="Tegner J."/>
            <person name="Teichmann S.A."/>
            <person name="Ueda H.R."/>
            <person name="van Nimwegen E."/>
            <person name="Verardo R."/>
            <person name="Wei C.L."/>
            <person name="Yagi K."/>
            <person name="Yamanishi H."/>
            <person name="Zabarovsky E."/>
            <person name="Zhu S."/>
            <person name="Zimmer A."/>
            <person name="Hide W."/>
            <person name="Bult C."/>
            <person name="Grimmond S.M."/>
            <person name="Teasdale R.D."/>
            <person name="Liu E.T."/>
            <person name="Brusic V."/>
            <person name="Quackenbush J."/>
            <person name="Wahlestedt C."/>
            <person name="Mattick J.S."/>
            <person name="Hume D.A."/>
            <person name="Kai C."/>
            <person name="Sasaki D."/>
            <person name="Tomaru Y."/>
            <person name="Fukuda S."/>
            <person name="Kanamori-Katayama M."/>
            <person name="Suzuki M."/>
            <person name="Aoki J."/>
            <person name="Arakawa T."/>
            <person name="Iida J."/>
            <person name="Imamura K."/>
            <person name="Itoh M."/>
            <person name="Kato T."/>
            <person name="Kawaji H."/>
            <person name="Kawagashira N."/>
            <person name="Kawashima T."/>
            <person name="Kojima M."/>
            <person name="Kondo S."/>
            <person name="Konno H."/>
            <person name="Nakano K."/>
            <person name="Ninomiya N."/>
            <person name="Nishio T."/>
            <person name="Okada M."/>
            <person name="Plessy C."/>
            <person name="Shibata K."/>
            <person name="Shiraki T."/>
            <person name="Suzuki S."/>
            <person name="Tagami M."/>
            <person name="Waki K."/>
            <person name="Watahiki A."/>
            <person name="Okamura-Oho Y."/>
            <person name="Suzuki H."/>
            <person name="Kawai J."/>
            <person name="Hayashizaki Y."/>
        </authorList>
    </citation>
    <scope>NUCLEOTIDE SEQUENCE [LARGE SCALE MRNA]</scope>
    <source>
        <strain evidence="10">C57BL/6J</strain>
        <strain evidence="11">NOD</strain>
        <tissue evidence="13">Bone marrow</tissue>
        <tissue evidence="12">Cerebellum</tissue>
        <tissue evidence="9">Embryo</tissue>
        <tissue evidence="10">Kidney</tissue>
        <tissue evidence="11">Thymus</tissue>
    </source>
</reference>
<reference evidence="7" key="2">
    <citation type="journal article" date="2004" name="Genome Res.">
        <title>The status, quality, and expansion of the NIH full-length cDNA project: the Mammalian Gene Collection (MGC).</title>
        <authorList>
            <consortium name="The MGC Project Team"/>
        </authorList>
    </citation>
    <scope>NUCLEOTIDE SEQUENCE [LARGE SCALE MRNA]</scope>
    <source>
        <strain evidence="7">FVB/N-3</strain>
        <strain evidence="8">ICR</strain>
        <tissue evidence="7">Mammary tumor</tissue>
        <tissue evidence="8">Trophoblast stem cell</tissue>
    </source>
</reference>
<reference key="3">
    <citation type="journal article" date="2008" name="Biochem. Biophys. Res. Commun.">
        <title>Expression and function of TETRAN, a new type of membrane transporter.</title>
        <authorList>
            <person name="Ushijima H."/>
            <person name="Hiasa M."/>
            <person name="Namba T."/>
            <person name="Hwang H.J."/>
            <person name="Hoshino T."/>
            <person name="Mima S."/>
            <person name="Tsuchiya T."/>
            <person name="Moriyama Y."/>
            <person name="Mizushima T."/>
        </authorList>
    </citation>
    <scope>TISSUE SPECIFICITY</scope>
    <scope>SUBCELLULAR LOCATION</scope>
</reference>
<reference key="4">
    <citation type="journal article" date="2010" name="Cell">
        <title>A tissue-specific atlas of mouse protein phosphorylation and expression.</title>
        <authorList>
            <person name="Huttlin E.L."/>
            <person name="Jedrychowski M.P."/>
            <person name="Elias J.E."/>
            <person name="Goswami T."/>
            <person name="Rad R."/>
            <person name="Beausoleil S.A."/>
            <person name="Villen J."/>
            <person name="Haas W."/>
            <person name="Sowa M.E."/>
            <person name="Gygi S.P."/>
        </authorList>
    </citation>
    <scope>IDENTIFICATION BY MASS SPECTROMETRY [LARGE SCALE ANALYSIS]</scope>
    <source>
        <tissue>Lung</tissue>
        <tissue>Spleen</tissue>
    </source>
</reference>
<reference key="5">
    <citation type="journal article" date="2012" name="Immunol. Lett.">
        <title>Establishment of monoclonal antibodies against a novel eosinophil-specific cell surface molecule, major facilitator super family domain containing 10.</title>
        <authorList>
            <person name="Motoi Y."/>
            <person name="Saeki M."/>
            <person name="Nishimura T."/>
            <person name="Katayama K."/>
            <person name="Kitamura N."/>
            <person name="Ichikawa H."/>
            <person name="Miyoshi H."/>
            <person name="Kaminuma O."/>
            <person name="Hiroi T."/>
        </authorList>
    </citation>
    <scope>TISSUE SPECIFICITY</scope>
    <scope>SUBCELLULAR LOCATION</scope>
</reference>
<reference key="6">
    <citation type="journal article" date="2019" name="Nucleus">
        <title>Identification of new transmembrane proteins concentrated at the nuclear envelope using organellar proteomics of mesenchymal cells.</title>
        <authorList>
            <person name="Cheng L.C."/>
            <person name="Baboo S."/>
            <person name="Lindsay C."/>
            <person name="Brusman L."/>
            <person name="Martinez-Bartolome S."/>
            <person name="Tapia O."/>
            <person name="Zhang X."/>
            <person name="Yates J.R. III"/>
            <person name="Gerace L."/>
        </authorList>
    </citation>
    <scope>IDENTIFICATION BY MASS SPECTROMETRY</scope>
    <scope>SUBCELLULAR LOCATION</scope>
</reference>
<sequence>MGWAGDAGCTPRPPIRPRPASERRVIIVLFLGLLLDLLAFTLLLPLLPGLLERHGREQDPLYGSWQRGVDWFASAIGMPAEKRYNSVLFGGLIGSAFSLLQFFSAPLTGAASDYLGRRPVMMLSLTGLAISYAVWATSRSFKAFLASRVIGGISKGNVNLSTAIVADLGSPPTRSQGMAVIGVAFSLAFTLGPMLGAFLSVEMVPWISLLFAISDMLFIFCFLPETLPQEKRASSVTLGFHTAAHLLSPLALLRFAAVTHSQDPPAEHRLRNLRRLGLVYFLYLFLFSGLEYTLSFLAHQRFQFSSLQQGKMFFFIGLTMATIQGTYARRISPGKEAAAVTRAMLLLVPAFLLIGWAHSLPTLGLGLMLYSFAAAVVVPGLSTMVSSYGSPGQKGTIMGILRSLGALGRALGPVVAASVYWLTGAQVCFTVCSALFLLPFLLLWKLKHPAETSKEE</sequence>
<proteinExistence type="evidence at protein level"/>
<dbReference type="EMBL" id="AK003763">
    <property type="protein sequence ID" value="BAB22982.1"/>
    <property type="molecule type" value="mRNA"/>
</dbReference>
<dbReference type="EMBL" id="AK018736">
    <property type="protein sequence ID" value="BAB31378.1"/>
    <property type="molecule type" value="mRNA"/>
</dbReference>
<dbReference type="EMBL" id="AK089055">
    <property type="protein sequence ID" value="BAC40724.1"/>
    <property type="molecule type" value="mRNA"/>
</dbReference>
<dbReference type="EMBL" id="AK144407">
    <property type="protein sequence ID" value="BAE25874.1"/>
    <property type="molecule type" value="mRNA"/>
</dbReference>
<dbReference type="EMBL" id="AK152438">
    <property type="protein sequence ID" value="BAE31219.1"/>
    <property type="molecule type" value="mRNA"/>
</dbReference>
<dbReference type="EMBL" id="BC023012">
    <property type="protein sequence ID" value="AAH23012.1"/>
    <property type="molecule type" value="mRNA"/>
</dbReference>
<dbReference type="EMBL" id="BC064775">
    <property type="protein sequence ID" value="AAH64775.1"/>
    <property type="molecule type" value="mRNA"/>
</dbReference>
<dbReference type="CCDS" id="CCDS19217.1"/>
<dbReference type="RefSeq" id="NP_001343907.1">
    <property type="nucleotide sequence ID" value="NM_001356978.2"/>
</dbReference>
<dbReference type="RefSeq" id="NP_001343908.1">
    <property type="nucleotide sequence ID" value="NM_001356979.2"/>
</dbReference>
<dbReference type="RefSeq" id="NP_001399429.1">
    <property type="nucleotide sequence ID" value="NM_001412500.1"/>
</dbReference>
<dbReference type="RefSeq" id="NP_001399430.1">
    <property type="nucleotide sequence ID" value="NM_001412501.1"/>
</dbReference>
<dbReference type="RefSeq" id="NP_001399431.1">
    <property type="nucleotide sequence ID" value="NM_001412502.1"/>
</dbReference>
<dbReference type="RefSeq" id="NP_001399432.1">
    <property type="nucleotide sequence ID" value="NM_001412503.1"/>
</dbReference>
<dbReference type="RefSeq" id="NP_001399433.1">
    <property type="nucleotide sequence ID" value="NM_001412504.1"/>
</dbReference>
<dbReference type="RefSeq" id="NP_001399434.1">
    <property type="nucleotide sequence ID" value="NM_001412505.1"/>
</dbReference>
<dbReference type="RefSeq" id="NP_080936.1">
    <property type="nucleotide sequence ID" value="NM_026660.4"/>
</dbReference>
<dbReference type="RefSeq" id="XP_006504140.1">
    <property type="nucleotide sequence ID" value="XM_006504077.3"/>
</dbReference>
<dbReference type="RefSeq" id="XP_006504141.1">
    <property type="nucleotide sequence ID" value="XM_006504078.3"/>
</dbReference>
<dbReference type="RefSeq" id="XP_011239069.1">
    <property type="nucleotide sequence ID" value="XM_011240767.2"/>
</dbReference>
<dbReference type="RefSeq" id="XP_011239070.1">
    <property type="nucleotide sequence ID" value="XM_011240768.2"/>
</dbReference>
<dbReference type="RefSeq" id="XP_017176573.1">
    <property type="nucleotide sequence ID" value="XM_017321084.1"/>
</dbReference>
<dbReference type="SMR" id="Q9D2V8"/>
<dbReference type="BioGRID" id="212789">
    <property type="interactions" value="3"/>
</dbReference>
<dbReference type="FunCoup" id="Q9D2V8">
    <property type="interactions" value="475"/>
</dbReference>
<dbReference type="STRING" id="10090.ENSMUSP00000001109"/>
<dbReference type="TCDB" id="2.A.1.2.73">
    <property type="family name" value="the major facilitator superfamily (mfs)"/>
</dbReference>
<dbReference type="GlyCosmos" id="Q9D2V8">
    <property type="glycosylation" value="1 site, No reported glycans"/>
</dbReference>
<dbReference type="GlyGen" id="Q9D2V8">
    <property type="glycosylation" value="2 sites"/>
</dbReference>
<dbReference type="PhosphoSitePlus" id="Q9D2V8"/>
<dbReference type="SwissPalm" id="Q9D2V8"/>
<dbReference type="PaxDb" id="10090-ENSMUSP00000001109"/>
<dbReference type="ProteomicsDB" id="295600"/>
<dbReference type="Pumba" id="Q9D2V8"/>
<dbReference type="Antibodypedia" id="8956">
    <property type="antibodies" value="75 antibodies from 20 providers"/>
</dbReference>
<dbReference type="DNASU" id="68294"/>
<dbReference type="Ensembl" id="ENSMUST00000001109.11">
    <property type="protein sequence ID" value="ENSMUSP00000001109.5"/>
    <property type="gene ID" value="ENSMUSG00000001082.13"/>
</dbReference>
<dbReference type="Ensembl" id="ENSMUST00000114329.8">
    <property type="protein sequence ID" value="ENSMUSP00000109968.2"/>
    <property type="gene ID" value="ENSMUSG00000001082.13"/>
</dbReference>
<dbReference type="Ensembl" id="ENSMUST00000114331.10">
    <property type="protein sequence ID" value="ENSMUSP00000109970.4"/>
    <property type="gene ID" value="ENSMUSG00000001082.13"/>
</dbReference>
<dbReference type="GeneID" id="68294"/>
<dbReference type="KEGG" id="mmu:68294"/>
<dbReference type="UCSC" id="uc008xct.1">
    <property type="organism name" value="mouse"/>
</dbReference>
<dbReference type="AGR" id="MGI:1915544"/>
<dbReference type="CTD" id="10227"/>
<dbReference type="MGI" id="MGI:1915544">
    <property type="gene designation" value="Mfsd10"/>
</dbReference>
<dbReference type="VEuPathDB" id="HostDB:ENSMUSG00000001082"/>
<dbReference type="eggNOG" id="KOG2615">
    <property type="taxonomic scope" value="Eukaryota"/>
</dbReference>
<dbReference type="GeneTree" id="ENSGT00940000164295"/>
<dbReference type="InParanoid" id="Q9D2V8"/>
<dbReference type="OMA" id="EWYVNIS"/>
<dbReference type="OrthoDB" id="196650at2759"/>
<dbReference type="PhylomeDB" id="Q9D2V8"/>
<dbReference type="TreeFam" id="TF314512"/>
<dbReference type="BioGRID-ORCS" id="68294">
    <property type="hits" value="3 hits in 82 CRISPR screens"/>
</dbReference>
<dbReference type="ChiTaRS" id="Mfsd10">
    <property type="organism name" value="mouse"/>
</dbReference>
<dbReference type="PRO" id="PR:Q9D2V8"/>
<dbReference type="Proteomes" id="UP000000589">
    <property type="component" value="Chromosome 5"/>
</dbReference>
<dbReference type="RNAct" id="Q9D2V8">
    <property type="molecule type" value="protein"/>
</dbReference>
<dbReference type="Bgee" id="ENSMUSG00000001082">
    <property type="expression patterns" value="Expressed in epiblast cell in embryo and 226 other cell types or tissues"/>
</dbReference>
<dbReference type="ExpressionAtlas" id="Q9D2V8">
    <property type="expression patterns" value="baseline and differential"/>
</dbReference>
<dbReference type="GO" id="GO:0031526">
    <property type="term" value="C:brush border membrane"/>
    <property type="evidence" value="ECO:0000314"/>
    <property type="project" value="MGI"/>
</dbReference>
<dbReference type="GO" id="GO:0030659">
    <property type="term" value="C:cytoplasmic vesicle membrane"/>
    <property type="evidence" value="ECO:0000266"/>
    <property type="project" value="MGI"/>
</dbReference>
<dbReference type="GO" id="GO:0005637">
    <property type="term" value="C:nuclear inner membrane"/>
    <property type="evidence" value="ECO:0000314"/>
    <property type="project" value="UniProtKB"/>
</dbReference>
<dbReference type="GO" id="GO:0008514">
    <property type="term" value="F:organic anion transmembrane transporter activity"/>
    <property type="evidence" value="ECO:0000266"/>
    <property type="project" value="MGI"/>
</dbReference>
<dbReference type="GO" id="GO:0006915">
    <property type="term" value="P:apoptotic process"/>
    <property type="evidence" value="ECO:0007669"/>
    <property type="project" value="UniProtKB-KW"/>
</dbReference>
<dbReference type="GO" id="GO:0043252">
    <property type="term" value="P:sodium-independent organic anion transport"/>
    <property type="evidence" value="ECO:0000266"/>
    <property type="project" value="MGI"/>
</dbReference>
<dbReference type="FunFam" id="1.20.1250.20:FF:000181">
    <property type="entry name" value="Major facilitator superfamily domain-containing protein 10"/>
    <property type="match status" value="1"/>
</dbReference>
<dbReference type="Gene3D" id="1.20.1250.20">
    <property type="entry name" value="MFS general substrate transporter like domains"/>
    <property type="match status" value="1"/>
</dbReference>
<dbReference type="InterPro" id="IPR011701">
    <property type="entry name" value="MFS"/>
</dbReference>
<dbReference type="InterPro" id="IPR020846">
    <property type="entry name" value="MFS_dom"/>
</dbReference>
<dbReference type="InterPro" id="IPR036259">
    <property type="entry name" value="MFS_trans_sf"/>
</dbReference>
<dbReference type="InterPro" id="IPR005829">
    <property type="entry name" value="Sugar_transporter_CS"/>
</dbReference>
<dbReference type="PANTHER" id="PTHR23504">
    <property type="entry name" value="MAJOR FACILITATOR SUPERFAMILY DOMAIN-CONTAINING PROTEIN 10"/>
    <property type="match status" value="1"/>
</dbReference>
<dbReference type="PANTHER" id="PTHR23504:SF31">
    <property type="entry name" value="MAJOR FACILITATOR SUPERFAMILY DOMAIN-CONTAINING PROTEIN 10"/>
    <property type="match status" value="1"/>
</dbReference>
<dbReference type="Pfam" id="PF07690">
    <property type="entry name" value="MFS_1"/>
    <property type="match status" value="1"/>
</dbReference>
<dbReference type="SUPFAM" id="SSF103473">
    <property type="entry name" value="MFS general substrate transporter"/>
    <property type="match status" value="1"/>
</dbReference>
<dbReference type="PROSITE" id="PS50850">
    <property type="entry name" value="MFS"/>
    <property type="match status" value="1"/>
</dbReference>
<accession>Q9D2V8</accession>
<accession>Q3U800</accession>
<accession>Q3UN73</accession>
<accession>Q9D1A7</accession>
<name>MFS10_MOUSE</name>
<feature type="chain" id="PRO_0000324659" description="Major facilitator superfamily domain-containing protein 10">
    <location>
        <begin position="1"/>
        <end position="456"/>
    </location>
</feature>
<feature type="transmembrane region" description="Helical" evidence="2">
    <location>
        <begin position="25"/>
        <end position="45"/>
    </location>
</feature>
<feature type="transmembrane region" description="Helical" evidence="2">
    <location>
        <begin position="87"/>
        <end position="107"/>
    </location>
</feature>
<feature type="transmembrane region" description="Helical" evidence="2">
    <location>
        <begin position="114"/>
        <end position="136"/>
    </location>
</feature>
<feature type="transmembrane region" description="Helical" evidence="2">
    <location>
        <begin position="179"/>
        <end position="199"/>
    </location>
</feature>
<feature type="transmembrane region" description="Helical" evidence="2">
    <location>
        <begin position="203"/>
        <end position="223"/>
    </location>
</feature>
<feature type="transmembrane region" description="Helical" evidence="2">
    <location>
        <begin position="278"/>
        <end position="298"/>
    </location>
</feature>
<feature type="transmembrane region" description="Helical" evidence="2">
    <location>
        <begin position="311"/>
        <end position="328"/>
    </location>
</feature>
<feature type="transmembrane region" description="Helical" evidence="2">
    <location>
        <begin position="345"/>
        <end position="365"/>
    </location>
</feature>
<feature type="transmembrane region" description="Helical" evidence="2">
    <location>
        <begin position="366"/>
        <end position="386"/>
    </location>
</feature>
<feature type="transmembrane region" description="Helical" evidence="2">
    <location>
        <begin position="403"/>
        <end position="423"/>
    </location>
</feature>
<feature type="transmembrane region" description="Helical" evidence="2">
    <location>
        <begin position="424"/>
        <end position="444"/>
    </location>
</feature>
<feature type="glycosylation site" description="N-linked (GlcNAc...) asparagine" evidence="2">
    <location>
        <position position="159"/>
    </location>
</feature>
<feature type="sequence conflict" description="In Ref. 1; BAB22982." evidence="6" ref="1">
    <original>G</original>
    <variation>R</variation>
    <location>
        <position position="177"/>
    </location>
</feature>
<feature type="sequence conflict" description="In Ref. 1; BAE31219." evidence="6" ref="1">
    <original>V</original>
    <variation>M</variation>
    <location>
        <position position="340"/>
    </location>
</feature>
<feature type="sequence conflict" description="In Ref. 1; BAE31219." evidence="6" ref="1">
    <original>M</original>
    <variation>L</variation>
    <location>
        <position position="384"/>
    </location>
</feature>
<evidence type="ECO:0000250" key="1">
    <source>
        <dbReference type="UniProtKB" id="Q14728"/>
    </source>
</evidence>
<evidence type="ECO:0000255" key="2"/>
<evidence type="ECO:0000269" key="3">
    <source>
    </source>
</evidence>
<evidence type="ECO:0000269" key="4">
    <source>
    </source>
</evidence>
<evidence type="ECO:0000269" key="5">
    <source>
    </source>
</evidence>
<evidence type="ECO:0000305" key="6"/>
<evidence type="ECO:0000312" key="7">
    <source>
        <dbReference type="EMBL" id="AAH23012.1"/>
    </source>
</evidence>
<evidence type="ECO:0000312" key="8">
    <source>
        <dbReference type="EMBL" id="AAH64775.1"/>
    </source>
</evidence>
<evidence type="ECO:0000312" key="9">
    <source>
        <dbReference type="EMBL" id="BAB22982.1"/>
    </source>
</evidence>
<evidence type="ECO:0000312" key="10">
    <source>
        <dbReference type="EMBL" id="BAB31378.1"/>
    </source>
</evidence>
<evidence type="ECO:0000312" key="11">
    <source>
        <dbReference type="EMBL" id="BAC40724.1"/>
    </source>
</evidence>
<evidence type="ECO:0000312" key="12">
    <source>
        <dbReference type="EMBL" id="BAE25874.1"/>
    </source>
</evidence>
<evidence type="ECO:0000312" key="13">
    <source>
        <dbReference type="EMBL" id="BAE31219.1"/>
    </source>
</evidence>
<keyword id="KW-0053">Apoptosis</keyword>
<keyword id="KW-1003">Cell membrane</keyword>
<keyword id="KW-0325">Glycoprotein</keyword>
<keyword id="KW-0472">Membrane</keyword>
<keyword id="KW-0539">Nucleus</keyword>
<keyword id="KW-1185">Reference proteome</keyword>
<keyword id="KW-0812">Transmembrane</keyword>
<keyword id="KW-1133">Transmembrane helix</keyword>
<keyword id="KW-0813">Transport</keyword>
<comment type="function">
    <text evidence="1">Probable organic anion transporter which may serve as a transporter for some non-steroidal anti-inflammatory drugs (NSAIDs) as well as other organic anions across the luminal membranes of renal proximal tubules at the final excretion step into the urine.</text>
</comment>
<comment type="subcellular location">
    <subcellularLocation>
        <location evidence="5">Nucleus inner membrane</location>
        <topology evidence="2">Multi-pass membrane protein</topology>
    </subcellularLocation>
    <subcellularLocation>
        <location evidence="4">Cell membrane</location>
        <topology evidence="2">Multi-pass membrane protein</topology>
    </subcellularLocation>
</comment>
<comment type="tissue specificity">
    <text evidence="3 4">Esxpressed in luminal membrane of renal tubules (PubMed:18638446). Expressed at the surface of eosinophils (at protein level) (PubMed:22820041).</text>
</comment>
<comment type="similarity">
    <text evidence="2">Belongs to the major facilitator superfamily.</text>
</comment>
<protein>
    <recommendedName>
        <fullName>Major facilitator superfamily domain-containing protein 10</fullName>
    </recommendedName>
    <alternativeName>
        <fullName>Tetracycline transporter-like protein</fullName>
    </alternativeName>
</protein>
<organism>
    <name type="scientific">Mus musculus</name>
    <name type="common">Mouse</name>
    <dbReference type="NCBI Taxonomy" id="10090"/>
    <lineage>
        <taxon>Eukaryota</taxon>
        <taxon>Metazoa</taxon>
        <taxon>Chordata</taxon>
        <taxon>Craniata</taxon>
        <taxon>Vertebrata</taxon>
        <taxon>Euteleostomi</taxon>
        <taxon>Mammalia</taxon>
        <taxon>Eutheria</taxon>
        <taxon>Euarchontoglires</taxon>
        <taxon>Glires</taxon>
        <taxon>Rodentia</taxon>
        <taxon>Myomorpha</taxon>
        <taxon>Muroidea</taxon>
        <taxon>Muridae</taxon>
        <taxon>Murinae</taxon>
        <taxon>Mus</taxon>
        <taxon>Mus</taxon>
    </lineage>
</organism>